<sequence>MYRLNIVSTNPSGSVQQQQQAQGQQVISSVVRPQQQQPPPQLALVQTGGSGGTTTTIIGLTSLNALNATTITGLVAGAAGSSTSAIAAAGASNSGSGPSTATTKHILKAATTNNNISIVKIVDDIMLKAVKVEPLPMDTGGGGGGVSMIPSSATTSGGVTVTAIPASVAPMPPVAAGTNVSSNGSVTVYASGKRRLESNEEWISSPSPGSVPGSAPPLSPSPGSQSTTYTTTMSNGYSSPMSTGSYDPYSPNGKMGREDLSPSSSLNGYTDGSDAKKQKKGPTPRQQEELCLVCGDRESGYHYNALTCEGCKGFFRRSVTKNAVYCCKFGHACEMDMYMRRKCQECRLKKCLAVGMRPECVVPENQCAIKRKEKKAQKEKDKVQTNATVSTTNSTYRSEILPILMKCDPPPHQAIPLLPEKLLQENRLRNIPLLTANQMAVIYKLIWYQDGYEQPSEEDLKRIMIGSPNEEEDQHDVHFRHITEITILTVQLIVEFAKGLPAFTKIPQEDQITLLKACSSEVMMLRMARRYDAATDSILFANNRSYTRDSYRMAGMADTIEDLLHFCRQMFSLTVDNVEYALLTAIVIFSDRPGLEQAELVEHIQSYYIDTLRIYILNRHAGDPKCSVIFAKLLSILTELRTLGNQNSEMCFSLKLKNRKLPRFLEEIWDVQDIPPSMQAQMHSHGTQSSSSSSSSSSSSSNGSSNGNSSSNSNSSQHGPHPHPHGQQLTPNQQQHQQQHSQLQQVHANGSGSGGGSNNNSSSGGVVPGLGMLDQV</sequence>
<dbReference type="EMBL" id="U02021">
    <property type="protein sequence ID" value="AAA87394.1"/>
    <property type="molecule type" value="mRNA"/>
</dbReference>
<dbReference type="EMBL" id="AY345989">
    <property type="protein sequence ID" value="AAQ23183.1"/>
    <property type="molecule type" value="mRNA"/>
</dbReference>
<dbReference type="EMBL" id="CH477596">
    <property type="protein sequence ID" value="EAT38529.1"/>
    <property type="status" value="ALT_SEQ"/>
    <property type="molecule type" value="Genomic_DNA"/>
</dbReference>
<dbReference type="EMBL" id="CH477685">
    <property type="status" value="NOT_ANNOTATED_CDS"/>
    <property type="molecule type" value="Genomic_DNA"/>
</dbReference>
<dbReference type="RefSeq" id="XP_001660279.1">
    <property type="nucleotide sequence ID" value="XM_001660229.2"/>
</dbReference>
<dbReference type="SMR" id="P49880"/>
<dbReference type="FunCoup" id="P49880">
    <property type="interactions" value="178"/>
</dbReference>
<dbReference type="STRING" id="7159.P49880"/>
<dbReference type="BindingDB" id="P49880"/>
<dbReference type="ChEMBL" id="CHEMBL3413"/>
<dbReference type="PaxDb" id="7159-AAEL009600-PA"/>
<dbReference type="VEuPathDB" id="VectorBase:AAEL019431"/>
<dbReference type="eggNOG" id="KOG3575">
    <property type="taxonomic scope" value="Eukaryota"/>
</dbReference>
<dbReference type="HOGENOM" id="CLU_007368_12_4_1"/>
<dbReference type="InParanoid" id="P49880"/>
<dbReference type="OrthoDB" id="5837785at2759"/>
<dbReference type="Proteomes" id="UP000008820">
    <property type="component" value="Unassembled WGS sequence"/>
</dbReference>
<dbReference type="Proteomes" id="UP000682892">
    <property type="component" value="Chromosome 2"/>
</dbReference>
<dbReference type="Proteomes" id="UP000682892">
    <property type="component" value="Unassembled WGS sequence"/>
</dbReference>
<dbReference type="GO" id="GO:0090575">
    <property type="term" value="C:RNA polymerase II transcription regulator complex"/>
    <property type="evidence" value="ECO:0007669"/>
    <property type="project" value="TreeGrafter"/>
</dbReference>
<dbReference type="GO" id="GO:0035100">
    <property type="term" value="F:ecdysone binding"/>
    <property type="evidence" value="ECO:0007669"/>
    <property type="project" value="InterPro"/>
</dbReference>
<dbReference type="GO" id="GO:0046872">
    <property type="term" value="F:metal ion binding"/>
    <property type="evidence" value="ECO:0000269"/>
    <property type="project" value="DisProt"/>
</dbReference>
<dbReference type="GO" id="GO:0004879">
    <property type="term" value="F:nuclear receptor activity"/>
    <property type="evidence" value="ECO:0007669"/>
    <property type="project" value="InterPro"/>
</dbReference>
<dbReference type="GO" id="GO:0000978">
    <property type="term" value="F:RNA polymerase II cis-regulatory region sequence-specific DNA binding"/>
    <property type="evidence" value="ECO:0007669"/>
    <property type="project" value="TreeGrafter"/>
</dbReference>
<dbReference type="GO" id="GO:0008270">
    <property type="term" value="F:zinc ion binding"/>
    <property type="evidence" value="ECO:0007669"/>
    <property type="project" value="UniProtKB-KW"/>
</dbReference>
<dbReference type="GO" id="GO:0030154">
    <property type="term" value="P:cell differentiation"/>
    <property type="evidence" value="ECO:0007669"/>
    <property type="project" value="TreeGrafter"/>
</dbReference>
<dbReference type="GO" id="GO:0035076">
    <property type="term" value="P:ecdysone receptor signaling pathway"/>
    <property type="evidence" value="ECO:0007669"/>
    <property type="project" value="InterPro"/>
</dbReference>
<dbReference type="GO" id="GO:0000122">
    <property type="term" value="P:negative regulation of transcription by RNA polymerase II"/>
    <property type="evidence" value="ECO:0007669"/>
    <property type="project" value="TreeGrafter"/>
</dbReference>
<dbReference type="GO" id="GO:0045944">
    <property type="term" value="P:positive regulation of transcription by RNA polymerase II"/>
    <property type="evidence" value="ECO:0007669"/>
    <property type="project" value="TreeGrafter"/>
</dbReference>
<dbReference type="CDD" id="cd07161">
    <property type="entry name" value="NR_DBD_EcR"/>
    <property type="match status" value="1"/>
</dbReference>
<dbReference type="CDD" id="cd06938">
    <property type="entry name" value="NR_LBD_EcR"/>
    <property type="match status" value="1"/>
</dbReference>
<dbReference type="FunFam" id="1.10.565.10:FF:000030">
    <property type="entry name" value="Ecdysone receptor (Isoform A)"/>
    <property type="match status" value="1"/>
</dbReference>
<dbReference type="FunFam" id="3.30.50.10:FF:000031">
    <property type="entry name" value="Ecdysone receptor A1"/>
    <property type="match status" value="1"/>
</dbReference>
<dbReference type="Gene3D" id="3.30.50.10">
    <property type="entry name" value="Erythroid Transcription Factor GATA-1, subunit A"/>
    <property type="match status" value="1"/>
</dbReference>
<dbReference type="Gene3D" id="1.10.565.10">
    <property type="entry name" value="Retinoid X Receptor"/>
    <property type="match status" value="1"/>
</dbReference>
<dbReference type="InterPro" id="IPR003069">
    <property type="entry name" value="Ecdystd_rcpt"/>
</dbReference>
<dbReference type="InterPro" id="IPR035500">
    <property type="entry name" value="NHR-like_dom_sf"/>
</dbReference>
<dbReference type="InterPro" id="IPR041889">
    <property type="entry name" value="NR_LBD_EcR"/>
</dbReference>
<dbReference type="InterPro" id="IPR000536">
    <property type="entry name" value="Nucl_hrmn_rcpt_lig-bd"/>
</dbReference>
<dbReference type="InterPro" id="IPR050234">
    <property type="entry name" value="Nuclear_hormone_rcpt_NR1"/>
</dbReference>
<dbReference type="InterPro" id="IPR001723">
    <property type="entry name" value="Nuclear_hrmn_rcpt"/>
</dbReference>
<dbReference type="InterPro" id="IPR001628">
    <property type="entry name" value="Znf_hrmn_rcpt"/>
</dbReference>
<dbReference type="InterPro" id="IPR013088">
    <property type="entry name" value="Znf_NHR/GATA"/>
</dbReference>
<dbReference type="PANTHER" id="PTHR24082:SF507">
    <property type="entry name" value="BILE ACID RECEPTOR-RELATED"/>
    <property type="match status" value="1"/>
</dbReference>
<dbReference type="PANTHER" id="PTHR24082">
    <property type="entry name" value="NUCLEAR HORMONE RECEPTOR"/>
    <property type="match status" value="1"/>
</dbReference>
<dbReference type="Pfam" id="PF00104">
    <property type="entry name" value="Hormone_recep"/>
    <property type="match status" value="1"/>
</dbReference>
<dbReference type="Pfam" id="PF00105">
    <property type="entry name" value="zf-C4"/>
    <property type="match status" value="1"/>
</dbReference>
<dbReference type="PRINTS" id="PR01283">
    <property type="entry name" value="ECDYSTEROIDR"/>
</dbReference>
<dbReference type="PRINTS" id="PR00398">
    <property type="entry name" value="STRDHORMONER"/>
</dbReference>
<dbReference type="PRINTS" id="PR00047">
    <property type="entry name" value="STROIDFINGER"/>
</dbReference>
<dbReference type="SMART" id="SM00430">
    <property type="entry name" value="HOLI"/>
    <property type="match status" value="1"/>
</dbReference>
<dbReference type="SMART" id="SM00399">
    <property type="entry name" value="ZnF_C4"/>
    <property type="match status" value="1"/>
</dbReference>
<dbReference type="SUPFAM" id="SSF57716">
    <property type="entry name" value="Glucocorticoid receptor-like (DNA-binding domain)"/>
    <property type="match status" value="1"/>
</dbReference>
<dbReference type="SUPFAM" id="SSF48508">
    <property type="entry name" value="Nuclear receptor ligand-binding domain"/>
    <property type="match status" value="1"/>
</dbReference>
<dbReference type="PROSITE" id="PS51843">
    <property type="entry name" value="NR_LBD"/>
    <property type="match status" value="1"/>
</dbReference>
<dbReference type="PROSITE" id="PS00031">
    <property type="entry name" value="NUCLEAR_REC_DBD_1"/>
    <property type="match status" value="1"/>
</dbReference>
<dbReference type="PROSITE" id="PS51030">
    <property type="entry name" value="NUCLEAR_REC_DBD_2"/>
    <property type="match status" value="1"/>
</dbReference>
<evidence type="ECO:0000255" key="1"/>
<evidence type="ECO:0000255" key="2">
    <source>
        <dbReference type="PROSITE-ProRule" id="PRU00407"/>
    </source>
</evidence>
<evidence type="ECO:0000255" key="3">
    <source>
        <dbReference type="PROSITE-ProRule" id="PRU01189"/>
    </source>
</evidence>
<evidence type="ECO:0000256" key="4">
    <source>
        <dbReference type="SAM" id="MobiDB-lite"/>
    </source>
</evidence>
<evidence type="ECO:0000269" key="5">
    <source>
    </source>
</evidence>
<evidence type="ECO:0000269" key="6">
    <source>
    </source>
</evidence>
<evidence type="ECO:0000303" key="7">
    <source>
    </source>
</evidence>
<evidence type="ECO:0000305" key="8"/>
<proteinExistence type="evidence at protein level"/>
<organism>
    <name type="scientific">Aedes aegypti</name>
    <name type="common">Yellowfever mosquito</name>
    <name type="synonym">Culex aegypti</name>
    <dbReference type="NCBI Taxonomy" id="7159"/>
    <lineage>
        <taxon>Eukaryota</taxon>
        <taxon>Metazoa</taxon>
        <taxon>Ecdysozoa</taxon>
        <taxon>Arthropoda</taxon>
        <taxon>Hexapoda</taxon>
        <taxon>Insecta</taxon>
        <taxon>Pterygota</taxon>
        <taxon>Neoptera</taxon>
        <taxon>Endopterygota</taxon>
        <taxon>Diptera</taxon>
        <taxon>Nematocera</taxon>
        <taxon>Culicoidea</taxon>
        <taxon>Culicidae</taxon>
        <taxon>Culicinae</taxon>
        <taxon>Aedini</taxon>
        <taxon>Aedes</taxon>
        <taxon>Stegomyia</taxon>
    </lineage>
</organism>
<protein>
    <recommendedName>
        <fullName>Ecdysone receptor</fullName>
    </recommendedName>
    <alternativeName>
        <fullName>20-hydroxy-ecdysone receptor</fullName>
        <shortName>20E receptor</shortName>
    </alternativeName>
    <alternativeName>
        <fullName>EcRH</fullName>
        <shortName>AaEcR</shortName>
    </alternativeName>
    <alternativeName>
        <fullName>Ecdysteroid receptor</fullName>
    </alternativeName>
    <alternativeName>
        <fullName>Nuclear receptor subfamily 1 group H member 1</fullName>
    </alternativeName>
</protein>
<keyword id="KW-0025">Alternative splicing</keyword>
<keyword id="KW-0238">DNA-binding</keyword>
<keyword id="KW-0479">Metal-binding</keyword>
<keyword id="KW-0539">Nucleus</keyword>
<keyword id="KW-0675">Receptor</keyword>
<keyword id="KW-1185">Reference proteome</keyword>
<keyword id="KW-0804">Transcription</keyword>
<keyword id="KW-0805">Transcription regulation</keyword>
<keyword id="KW-0862">Zinc</keyword>
<keyword id="KW-0863">Zinc-finger</keyword>
<name>ECR_AEDAE</name>
<feature type="chain" id="PRO_0000053525" description="Ecdysone receptor">
    <location>
        <begin position="1"/>
        <end position="776"/>
    </location>
</feature>
<feature type="domain" description="NR LBD" evidence="3">
    <location>
        <begin position="437"/>
        <end position="673"/>
    </location>
</feature>
<feature type="DNA-binding region" description="Nuclear receptor" evidence="2">
    <location>
        <begin position="288"/>
        <end position="363"/>
    </location>
</feature>
<feature type="zinc finger region" description="NR C4-type" evidence="2">
    <location>
        <begin position="291"/>
        <end position="311"/>
    </location>
</feature>
<feature type="zinc finger region" description="NR C4-type" evidence="2">
    <location>
        <begin position="327"/>
        <end position="346"/>
    </location>
</feature>
<feature type="region of interest" description="Modulating" evidence="1">
    <location>
        <begin position="1"/>
        <end position="290"/>
    </location>
</feature>
<feature type="region of interest" description="Disordered" evidence="4">
    <location>
        <begin position="199"/>
        <end position="283"/>
    </location>
</feature>
<feature type="region of interest" description="Disordered" evidence="4">
    <location>
        <begin position="679"/>
        <end position="776"/>
    </location>
</feature>
<feature type="compositionally biased region" description="Low complexity" evidence="4">
    <location>
        <begin position="204"/>
        <end position="213"/>
    </location>
</feature>
<feature type="compositionally biased region" description="Polar residues" evidence="4">
    <location>
        <begin position="227"/>
        <end position="245"/>
    </location>
</feature>
<feature type="compositionally biased region" description="Polar residues" evidence="4">
    <location>
        <begin position="261"/>
        <end position="270"/>
    </location>
</feature>
<feature type="compositionally biased region" description="Polar residues" evidence="4">
    <location>
        <begin position="679"/>
        <end position="688"/>
    </location>
</feature>
<feature type="compositionally biased region" description="Low complexity" evidence="4">
    <location>
        <begin position="689"/>
        <end position="745"/>
    </location>
</feature>
<feature type="splice variant" id="VSP_035029" description="In isoform B." evidence="7">
    <original>MYRLNIVSTNPSGSVQQQQQAQGQQVISSVVRPQQQQPPPQLALVQTGGSGGTTTTIIGLTSLNALNATTITGLVAGAAGSSTSAIAAAGASNSGSGPSTATTKHILKAATTNNNISIVKIVDDIMLKAVKVEPLPMDTGGGGGGVSMIPSSATTSGGVTVTAIPASVAPMPPVAAGTNVSSNGSVTVYASGKRRLESNEEWISSPSPGSVPGSAPPLSPSPGSQSTTYTTTMSNGYSSPMSTGSYDPYSPNGKM</original>
    <variation>MMKRRWSNNGGFTALRMLDDSSSEVTSSSAALGMTMSPNSLGSPNYDELELWSSYEDNAYNGHSVLSNGNNNLGGCGAANNLLMNGIVGNNNLNGMMNMASQAVQANANSIQHIVGNLINGVNPNQTLIPPLPSIIQNTLMNTPRSESVNSISSAALGMTMSPNSLGSPNYDELELWSSYEDNAYNGHSVLSNG</variation>
    <location>
        <begin position="1"/>
        <end position="255"/>
    </location>
</feature>
<reference key="1">
    <citation type="journal article" date="1995" name="Insect Biochem. Mol. Biol.">
        <title>Mosquito ecdysteroid receptor: analysis of the cDNA and expression during vitellogenesis.</title>
        <authorList>
            <person name="Cho W.-L."/>
            <person name="Kapitskaya M.Z."/>
            <person name="Raikhel A.S."/>
        </authorList>
    </citation>
    <scope>NUCLEOTIDE SEQUENCE [MRNA] (ISOFORM B)</scope>
    <scope>FUNCTION</scope>
    <scope>SUBUNIT</scope>
    <scope>TISSUE SPECIFICITY</scope>
    <source>
        <tissue>Fat body</tissue>
    </source>
</reference>
<reference key="2">
    <citation type="journal article" date="2002" name="Mol. Cell. Endocrinol.">
        <title>Differential expression and regulation by 20-hydroxyecdysone of mosquito ecdysteroid receptor isoforms A and B.</title>
        <authorList>
            <person name="Wang S.-F."/>
            <person name="Li C."/>
            <person name="Sun G."/>
            <person name="Zhu J."/>
            <person name="Raikhel A.S."/>
        </authorList>
    </citation>
    <scope>NUCLEOTIDE SEQUENCE [MRNA] (ISOFORM A)</scope>
    <scope>ALTERNATIVE SPLICING</scope>
    <scope>DNA-BINDING</scope>
    <scope>INTERACTION WITH USP</scope>
    <scope>TISSUE SPECIFICITY</scope>
    <scope>INDUCTION</scope>
</reference>
<reference key="3">
    <citation type="journal article" date="2007" name="Science">
        <title>Genome sequence of Aedes aegypti, a major arbovirus vector.</title>
        <authorList>
            <person name="Nene V."/>
            <person name="Wortman J.R."/>
            <person name="Lawson D."/>
            <person name="Haas B.J."/>
            <person name="Kodira C.D."/>
            <person name="Tu Z.J."/>
            <person name="Loftus B.J."/>
            <person name="Xi Z."/>
            <person name="Megy K."/>
            <person name="Grabherr M."/>
            <person name="Ren Q."/>
            <person name="Zdobnov E.M."/>
            <person name="Lobo N.F."/>
            <person name="Campbell K.S."/>
            <person name="Brown S.E."/>
            <person name="Bonaldo M.F."/>
            <person name="Zhu J."/>
            <person name="Sinkins S.P."/>
            <person name="Hogenkamp D.G."/>
            <person name="Amedeo P."/>
            <person name="Arensburger P."/>
            <person name="Atkinson P.W."/>
            <person name="Bidwell S.L."/>
            <person name="Biedler J."/>
            <person name="Birney E."/>
            <person name="Bruggner R.V."/>
            <person name="Costas J."/>
            <person name="Coy M.R."/>
            <person name="Crabtree J."/>
            <person name="Crawford M."/>
            <person name="DeBruyn B."/>
            <person name="DeCaprio D."/>
            <person name="Eiglmeier K."/>
            <person name="Eisenstadt E."/>
            <person name="El-Dorry H."/>
            <person name="Gelbart W.M."/>
            <person name="Gomes S.L."/>
            <person name="Hammond M."/>
            <person name="Hannick L.I."/>
            <person name="Hogan J.R."/>
            <person name="Holmes M.H."/>
            <person name="Jaffe D."/>
            <person name="Johnston S.J."/>
            <person name="Kennedy R.C."/>
            <person name="Koo H."/>
            <person name="Kravitz S."/>
            <person name="Kriventseva E.V."/>
            <person name="Kulp D."/>
            <person name="Labutti K."/>
            <person name="Lee E."/>
            <person name="Li S."/>
            <person name="Lovin D.D."/>
            <person name="Mao C."/>
            <person name="Mauceli E."/>
            <person name="Menck C.F."/>
            <person name="Miller J.R."/>
            <person name="Montgomery P."/>
            <person name="Mori A."/>
            <person name="Nascimento A.L."/>
            <person name="Naveira H.F."/>
            <person name="Nusbaum C."/>
            <person name="O'Leary S.B."/>
            <person name="Orvis J."/>
            <person name="Pertea M."/>
            <person name="Quesneville H."/>
            <person name="Reidenbach K.R."/>
            <person name="Rogers Y.-H.C."/>
            <person name="Roth C.W."/>
            <person name="Schneider J.R."/>
            <person name="Schatz M."/>
            <person name="Shumway M."/>
            <person name="Stanke M."/>
            <person name="Stinson E.O."/>
            <person name="Tubio J.M.C."/>
            <person name="Vanzee J.P."/>
            <person name="Verjovski-Almeida S."/>
            <person name="Werner D."/>
            <person name="White O.R."/>
            <person name="Wyder S."/>
            <person name="Zeng Q."/>
            <person name="Zhao Q."/>
            <person name="Zhao Y."/>
            <person name="Hill C.A."/>
            <person name="Raikhel A.S."/>
            <person name="Soares M.B."/>
            <person name="Knudson D.L."/>
            <person name="Lee N.H."/>
            <person name="Galagan J."/>
            <person name="Salzberg S.L."/>
            <person name="Paulsen I.T."/>
            <person name="Dimopoulos G."/>
            <person name="Collins F.H."/>
            <person name="Bruce B."/>
            <person name="Fraser-Liggett C.M."/>
            <person name="Severson D.W."/>
        </authorList>
    </citation>
    <scope>NUCLEOTIDE SEQUENCE [LARGE SCALE GENOMIC DNA]</scope>
    <source>
        <strain>LVPib12</strain>
    </source>
</reference>
<comment type="function">
    <text evidence="6">Receptor for ecdysone. Binds to ecdysone response elements (ECRES).</text>
</comment>
<comment type="subunit">
    <text evidence="6">Heterodimer of USP and ECR. Only the heterodimer is capable of high-affinity binding to ecdysone.</text>
</comment>
<comment type="subcellular location">
    <subcellularLocation>
        <location>Nucleus</location>
    </subcellularLocation>
</comment>
<comment type="alternative products">
    <event type="alternative splicing"/>
    <isoform>
        <id>P49880-1</id>
        <name>A</name>
        <sequence type="displayed"/>
    </isoform>
    <isoform>
        <id>P49880-2</id>
        <name>B</name>
        <sequence type="described" ref="VSP_035029"/>
    </isoform>
</comment>
<comment type="tissue specificity">
    <text evidence="5 6">A peak level expression is seen in the fat body of previtellogenic female mosquitos at one and two days after eclosion, levels fall three-fold at three days posteclosion.</text>
</comment>
<comment type="induction">
    <text evidence="5">Transcripts exhibit dramatically different patterns of expression after blood meal-triggered activation of vitellogenesis in the fat body. Isoform B is highly expressed and reaches its peak at 4 hours pbm (post blood meal). Isoform A peaks at 16-20 hours, when isoform B expression is lowest.</text>
</comment>
<comment type="similarity">
    <text evidence="8">Belongs to the nuclear hormone receptor family. NR1 subfamily.</text>
</comment>
<comment type="sequence caution" evidence="8">
    <conflict type="erroneous gene model prediction">
        <sequence resource="EMBL-CDS" id="EAT38529"/>
    </conflict>
</comment>
<gene>
    <name type="primary">EcR</name>
    <name type="synonym">NR1H1</name>
    <name type="ORF">AAEL009600</name>
</gene>
<accession>P49880</accession>
<accession>Q16VE1</accession>
<accession>Q6VA69</accession>